<organism>
    <name type="scientific">Yersinia pestis</name>
    <dbReference type="NCBI Taxonomy" id="632"/>
    <lineage>
        <taxon>Bacteria</taxon>
        <taxon>Pseudomonadati</taxon>
        <taxon>Pseudomonadota</taxon>
        <taxon>Gammaproteobacteria</taxon>
        <taxon>Enterobacterales</taxon>
        <taxon>Yersiniaceae</taxon>
        <taxon>Yersinia</taxon>
    </lineage>
</organism>
<sequence length="478" mass="53070">MILQSNSIAQQIADEGGVEAYLHAQQHKTMLRFLTCGSVDDGKSTLIGRLLHDTRQIYEDQLSTLHTDSKRIGTQGEKLDLALLVDGLQAEREQGITIDVAYRYFSTEKRKFIIADTPGHEQYTRNMATGASTCDLAILLIDARKGVLDQTRRHSFIATLLGIRHLVVAVNKMDLVGFQESVFTQFKDDYLSFAEQLPTDLDIKFVPLSALDGDNVASPSEKMDWYSGPTLLEILESVDVVNARRQQPLRFPVQYVNRPNLDFRGYAGTLSAGVVWVGQKVKVLPSGVESTVARIVTFDGDLTEANPGEAITLVLADEVDISRGDLLVDASETLKAARNALVDVVWMAEQPLVVGQSYDIKVAGKKTRARVENIQYQVEINSLTQRVVENLPLNGIGLVELAFDEPLLLDNYQRNRDTGGMIFIDRLSNVTVGAGLVREALASVYQENHDFSTFELELNALVRRHFPHWGARDLLGGK</sequence>
<feature type="chain" id="PRO_0000091536" description="Sulfate adenylyltransferase subunit 1">
    <location>
        <begin position="1"/>
        <end position="478"/>
    </location>
</feature>
<feature type="domain" description="tr-type G">
    <location>
        <begin position="28"/>
        <end position="244"/>
    </location>
</feature>
<feature type="region of interest" description="G1" evidence="1">
    <location>
        <begin position="37"/>
        <end position="44"/>
    </location>
</feature>
<feature type="region of interest" description="G2" evidence="1">
    <location>
        <begin position="95"/>
        <end position="99"/>
    </location>
</feature>
<feature type="region of interest" description="G3" evidence="1">
    <location>
        <begin position="116"/>
        <end position="119"/>
    </location>
</feature>
<feature type="region of interest" description="G4" evidence="1">
    <location>
        <begin position="171"/>
        <end position="174"/>
    </location>
</feature>
<feature type="region of interest" description="G5" evidence="1">
    <location>
        <begin position="209"/>
        <end position="211"/>
    </location>
</feature>
<feature type="binding site" evidence="2">
    <location>
        <begin position="37"/>
        <end position="44"/>
    </location>
    <ligand>
        <name>GTP</name>
        <dbReference type="ChEBI" id="CHEBI:37565"/>
    </ligand>
</feature>
<feature type="binding site" evidence="2">
    <location>
        <begin position="116"/>
        <end position="120"/>
    </location>
    <ligand>
        <name>GTP</name>
        <dbReference type="ChEBI" id="CHEBI:37565"/>
    </ligand>
</feature>
<feature type="binding site" evidence="2">
    <location>
        <begin position="171"/>
        <end position="174"/>
    </location>
    <ligand>
        <name>GTP</name>
        <dbReference type="ChEBI" id="CHEBI:37565"/>
    </ligand>
</feature>
<dbReference type="EC" id="2.7.7.4" evidence="2"/>
<dbReference type="EMBL" id="AL590842">
    <property type="protein sequence ID" value="CAL21954.1"/>
    <property type="molecule type" value="Genomic_DNA"/>
</dbReference>
<dbReference type="EMBL" id="AE009952">
    <property type="protein sequence ID" value="AAM84409.1"/>
    <property type="status" value="ALT_INIT"/>
    <property type="molecule type" value="Genomic_DNA"/>
</dbReference>
<dbReference type="EMBL" id="AE017042">
    <property type="protein sequence ID" value="AAS60595.1"/>
    <property type="status" value="ALT_INIT"/>
    <property type="molecule type" value="Genomic_DNA"/>
</dbReference>
<dbReference type="PIR" id="AG0408">
    <property type="entry name" value="AG0408"/>
</dbReference>
<dbReference type="RefSeq" id="WP_002228227.1">
    <property type="nucleotide sequence ID" value="NZ_WUCM01000008.1"/>
</dbReference>
<dbReference type="RefSeq" id="YP_002348258.1">
    <property type="nucleotide sequence ID" value="NC_003143.1"/>
</dbReference>
<dbReference type="SMR" id="Q8ZBP2"/>
<dbReference type="STRING" id="214092.YPO3365"/>
<dbReference type="PaxDb" id="214092-YPO3365"/>
<dbReference type="DNASU" id="1145771"/>
<dbReference type="EnsemblBacteria" id="AAS60595">
    <property type="protein sequence ID" value="AAS60595"/>
    <property type="gene ID" value="YP_0322"/>
</dbReference>
<dbReference type="GeneID" id="57975344"/>
<dbReference type="KEGG" id="ype:YPO3365"/>
<dbReference type="KEGG" id="ypk:y0824"/>
<dbReference type="KEGG" id="ypm:YP_0322"/>
<dbReference type="PATRIC" id="fig|214092.21.peg.3842"/>
<dbReference type="eggNOG" id="COG2895">
    <property type="taxonomic scope" value="Bacteria"/>
</dbReference>
<dbReference type="HOGENOM" id="CLU_007265_5_2_6"/>
<dbReference type="OrthoDB" id="9804504at2"/>
<dbReference type="UniPathway" id="UPA00140">
    <property type="reaction ID" value="UER00204"/>
</dbReference>
<dbReference type="Proteomes" id="UP000000815">
    <property type="component" value="Chromosome"/>
</dbReference>
<dbReference type="Proteomes" id="UP000001019">
    <property type="component" value="Chromosome"/>
</dbReference>
<dbReference type="Proteomes" id="UP000002490">
    <property type="component" value="Chromosome"/>
</dbReference>
<dbReference type="GO" id="GO:0005524">
    <property type="term" value="F:ATP binding"/>
    <property type="evidence" value="ECO:0007669"/>
    <property type="project" value="UniProtKB-KW"/>
</dbReference>
<dbReference type="GO" id="GO:0005525">
    <property type="term" value="F:GTP binding"/>
    <property type="evidence" value="ECO:0007669"/>
    <property type="project" value="UniProtKB-UniRule"/>
</dbReference>
<dbReference type="GO" id="GO:0003924">
    <property type="term" value="F:GTPase activity"/>
    <property type="evidence" value="ECO:0007669"/>
    <property type="project" value="InterPro"/>
</dbReference>
<dbReference type="GO" id="GO:0004781">
    <property type="term" value="F:sulfate adenylyltransferase (ATP) activity"/>
    <property type="evidence" value="ECO:0007669"/>
    <property type="project" value="UniProtKB-UniRule"/>
</dbReference>
<dbReference type="GO" id="GO:0070814">
    <property type="term" value="P:hydrogen sulfide biosynthetic process"/>
    <property type="evidence" value="ECO:0007669"/>
    <property type="project" value="UniProtKB-UniRule"/>
</dbReference>
<dbReference type="GO" id="GO:0000103">
    <property type="term" value="P:sulfate assimilation"/>
    <property type="evidence" value="ECO:0007669"/>
    <property type="project" value="UniProtKB-UniRule"/>
</dbReference>
<dbReference type="GO" id="GO:0006790">
    <property type="term" value="P:sulfur compound metabolic process"/>
    <property type="evidence" value="ECO:0000318"/>
    <property type="project" value="GO_Central"/>
</dbReference>
<dbReference type="CDD" id="cd04166">
    <property type="entry name" value="CysN_ATPS"/>
    <property type="match status" value="1"/>
</dbReference>
<dbReference type="CDD" id="cd03695">
    <property type="entry name" value="CysN_NodQ_II"/>
    <property type="match status" value="1"/>
</dbReference>
<dbReference type="CDD" id="cd04095">
    <property type="entry name" value="CysN_NoDQ_III"/>
    <property type="match status" value="1"/>
</dbReference>
<dbReference type="FunFam" id="2.40.30.10:FF:000027">
    <property type="entry name" value="Sulfate adenylyltransferase subunit 1"/>
    <property type="match status" value="1"/>
</dbReference>
<dbReference type="FunFam" id="2.40.30.10:FF:000031">
    <property type="entry name" value="Sulfate adenylyltransferase subunit 1"/>
    <property type="match status" value="1"/>
</dbReference>
<dbReference type="FunFam" id="3.40.50.300:FF:000119">
    <property type="entry name" value="Sulfate adenylyltransferase subunit 1"/>
    <property type="match status" value="1"/>
</dbReference>
<dbReference type="Gene3D" id="3.40.50.300">
    <property type="entry name" value="P-loop containing nucleotide triphosphate hydrolases"/>
    <property type="match status" value="1"/>
</dbReference>
<dbReference type="Gene3D" id="2.40.30.10">
    <property type="entry name" value="Translation factors"/>
    <property type="match status" value="2"/>
</dbReference>
<dbReference type="HAMAP" id="MF_00062">
    <property type="entry name" value="Sulf_adenylyltr_sub1"/>
    <property type="match status" value="1"/>
</dbReference>
<dbReference type="InterPro" id="IPR041757">
    <property type="entry name" value="CysN_GTP-bd"/>
</dbReference>
<dbReference type="InterPro" id="IPR044138">
    <property type="entry name" value="CysN_II"/>
</dbReference>
<dbReference type="InterPro" id="IPR044139">
    <property type="entry name" value="CysN_NoDQ_III"/>
</dbReference>
<dbReference type="InterPro" id="IPR031157">
    <property type="entry name" value="G_TR_CS"/>
</dbReference>
<dbReference type="InterPro" id="IPR054696">
    <property type="entry name" value="GTP-eEF1A_C"/>
</dbReference>
<dbReference type="InterPro" id="IPR027417">
    <property type="entry name" value="P-loop_NTPase"/>
</dbReference>
<dbReference type="InterPro" id="IPR005225">
    <property type="entry name" value="Small_GTP-bd"/>
</dbReference>
<dbReference type="InterPro" id="IPR011779">
    <property type="entry name" value="SO4_adenylTrfase_lsu"/>
</dbReference>
<dbReference type="InterPro" id="IPR000795">
    <property type="entry name" value="T_Tr_GTP-bd_dom"/>
</dbReference>
<dbReference type="InterPro" id="IPR050100">
    <property type="entry name" value="TRAFAC_GTPase_members"/>
</dbReference>
<dbReference type="InterPro" id="IPR009000">
    <property type="entry name" value="Transl_B-barrel_sf"/>
</dbReference>
<dbReference type="InterPro" id="IPR009001">
    <property type="entry name" value="Transl_elong_EF1A/Init_IF2_C"/>
</dbReference>
<dbReference type="NCBIfam" id="TIGR02034">
    <property type="entry name" value="CysN"/>
    <property type="match status" value="1"/>
</dbReference>
<dbReference type="NCBIfam" id="NF003478">
    <property type="entry name" value="PRK05124.1"/>
    <property type="match status" value="1"/>
</dbReference>
<dbReference type="NCBIfam" id="TIGR00231">
    <property type="entry name" value="small_GTP"/>
    <property type="match status" value="1"/>
</dbReference>
<dbReference type="PANTHER" id="PTHR23115">
    <property type="entry name" value="TRANSLATION FACTOR"/>
    <property type="match status" value="1"/>
</dbReference>
<dbReference type="Pfam" id="PF22594">
    <property type="entry name" value="GTP-eEF1A_C"/>
    <property type="match status" value="1"/>
</dbReference>
<dbReference type="Pfam" id="PF00009">
    <property type="entry name" value="GTP_EFTU"/>
    <property type="match status" value="1"/>
</dbReference>
<dbReference type="PRINTS" id="PR00315">
    <property type="entry name" value="ELONGATNFCT"/>
</dbReference>
<dbReference type="SUPFAM" id="SSF50465">
    <property type="entry name" value="EF-Tu/eEF-1alpha/eIF2-gamma C-terminal domain"/>
    <property type="match status" value="1"/>
</dbReference>
<dbReference type="SUPFAM" id="SSF52540">
    <property type="entry name" value="P-loop containing nucleoside triphosphate hydrolases"/>
    <property type="match status" value="1"/>
</dbReference>
<dbReference type="SUPFAM" id="SSF50447">
    <property type="entry name" value="Translation proteins"/>
    <property type="match status" value="1"/>
</dbReference>
<dbReference type="PROSITE" id="PS00301">
    <property type="entry name" value="G_TR_1"/>
    <property type="match status" value="1"/>
</dbReference>
<dbReference type="PROSITE" id="PS51722">
    <property type="entry name" value="G_TR_2"/>
    <property type="match status" value="1"/>
</dbReference>
<accession>Q8ZBP2</accession>
<accession>Q0WBT0</accession>
<accession>Q8D197</accession>
<comment type="function">
    <text evidence="2">With CysD forms the ATP sulfurylase (ATPS) that catalyzes the adenylation of sulfate producing adenosine 5'-phosphosulfate (APS) and diphosphate, the first enzymatic step in sulfur assimilation pathway. APS synthesis involves the formation of a high-energy phosphoric-sulfuric acid anhydride bond driven by GTP hydrolysis by CysN coupled to ATP hydrolysis by CysD.</text>
</comment>
<comment type="catalytic activity">
    <reaction evidence="2">
        <text>sulfate + ATP + H(+) = adenosine 5'-phosphosulfate + diphosphate</text>
        <dbReference type="Rhea" id="RHEA:18133"/>
        <dbReference type="ChEBI" id="CHEBI:15378"/>
        <dbReference type="ChEBI" id="CHEBI:16189"/>
        <dbReference type="ChEBI" id="CHEBI:30616"/>
        <dbReference type="ChEBI" id="CHEBI:33019"/>
        <dbReference type="ChEBI" id="CHEBI:58243"/>
        <dbReference type="EC" id="2.7.7.4"/>
    </reaction>
</comment>
<comment type="pathway">
    <text evidence="2">Sulfur metabolism; hydrogen sulfide biosynthesis; sulfite from sulfate: step 1/3.</text>
</comment>
<comment type="subunit">
    <text evidence="2">Heterodimer composed of CysD, the smaller subunit, and CysN.</text>
</comment>
<comment type="similarity">
    <text evidence="2">Belongs to the TRAFAC class translation factor GTPase superfamily. Classic translation factor GTPase family. CysN/NodQ subfamily.</text>
</comment>
<comment type="sequence caution" evidence="3">
    <conflict type="erroneous initiation">
        <sequence resource="EMBL-CDS" id="AAM84409"/>
    </conflict>
</comment>
<comment type="sequence caution" evidence="3">
    <conflict type="erroneous initiation">
        <sequence resource="EMBL-CDS" id="AAS60595"/>
    </conflict>
</comment>
<reference key="1">
    <citation type="journal article" date="2001" name="Nature">
        <title>Genome sequence of Yersinia pestis, the causative agent of plague.</title>
        <authorList>
            <person name="Parkhill J."/>
            <person name="Wren B.W."/>
            <person name="Thomson N.R."/>
            <person name="Titball R.W."/>
            <person name="Holden M.T.G."/>
            <person name="Prentice M.B."/>
            <person name="Sebaihia M."/>
            <person name="James K.D."/>
            <person name="Churcher C.M."/>
            <person name="Mungall K.L."/>
            <person name="Baker S."/>
            <person name="Basham D."/>
            <person name="Bentley S.D."/>
            <person name="Brooks K."/>
            <person name="Cerdeno-Tarraga A.-M."/>
            <person name="Chillingworth T."/>
            <person name="Cronin A."/>
            <person name="Davies R.M."/>
            <person name="Davis P."/>
            <person name="Dougan G."/>
            <person name="Feltwell T."/>
            <person name="Hamlin N."/>
            <person name="Holroyd S."/>
            <person name="Jagels K."/>
            <person name="Karlyshev A.V."/>
            <person name="Leather S."/>
            <person name="Moule S."/>
            <person name="Oyston P.C.F."/>
            <person name="Quail M.A."/>
            <person name="Rutherford K.M."/>
            <person name="Simmonds M."/>
            <person name="Skelton J."/>
            <person name="Stevens K."/>
            <person name="Whitehead S."/>
            <person name="Barrell B.G."/>
        </authorList>
    </citation>
    <scope>NUCLEOTIDE SEQUENCE [LARGE SCALE GENOMIC DNA]</scope>
    <source>
        <strain>CO-92 / Biovar Orientalis</strain>
    </source>
</reference>
<reference key="2">
    <citation type="journal article" date="2002" name="J. Bacteriol.">
        <title>Genome sequence of Yersinia pestis KIM.</title>
        <authorList>
            <person name="Deng W."/>
            <person name="Burland V."/>
            <person name="Plunkett G. III"/>
            <person name="Boutin A."/>
            <person name="Mayhew G.F."/>
            <person name="Liss P."/>
            <person name="Perna N.T."/>
            <person name="Rose D.J."/>
            <person name="Mau B."/>
            <person name="Zhou S."/>
            <person name="Schwartz D.C."/>
            <person name="Fetherston J.D."/>
            <person name="Lindler L.E."/>
            <person name="Brubaker R.R."/>
            <person name="Plano G.V."/>
            <person name="Straley S.C."/>
            <person name="McDonough K.A."/>
            <person name="Nilles M.L."/>
            <person name="Matson J.S."/>
            <person name="Blattner F.R."/>
            <person name="Perry R.D."/>
        </authorList>
    </citation>
    <scope>NUCLEOTIDE SEQUENCE [LARGE SCALE GENOMIC DNA]</scope>
    <source>
        <strain>KIM10+ / Biovar Mediaevalis</strain>
    </source>
</reference>
<reference key="3">
    <citation type="journal article" date="2004" name="DNA Res.">
        <title>Complete genome sequence of Yersinia pestis strain 91001, an isolate avirulent to humans.</title>
        <authorList>
            <person name="Song Y."/>
            <person name="Tong Z."/>
            <person name="Wang J."/>
            <person name="Wang L."/>
            <person name="Guo Z."/>
            <person name="Han Y."/>
            <person name="Zhang J."/>
            <person name="Pei D."/>
            <person name="Zhou D."/>
            <person name="Qin H."/>
            <person name="Pang X."/>
            <person name="Han Y."/>
            <person name="Zhai J."/>
            <person name="Li M."/>
            <person name="Cui B."/>
            <person name="Qi Z."/>
            <person name="Jin L."/>
            <person name="Dai R."/>
            <person name="Chen F."/>
            <person name="Li S."/>
            <person name="Ye C."/>
            <person name="Du Z."/>
            <person name="Lin W."/>
            <person name="Wang J."/>
            <person name="Yu J."/>
            <person name="Yang H."/>
            <person name="Wang J."/>
            <person name="Huang P."/>
            <person name="Yang R."/>
        </authorList>
    </citation>
    <scope>NUCLEOTIDE SEQUENCE [LARGE SCALE GENOMIC DNA]</scope>
    <source>
        <strain>91001 / Biovar Mediaevalis</strain>
    </source>
</reference>
<proteinExistence type="inferred from homology"/>
<keyword id="KW-0067">ATP-binding</keyword>
<keyword id="KW-0342">GTP-binding</keyword>
<keyword id="KW-0547">Nucleotide-binding</keyword>
<keyword id="KW-0548">Nucleotidyltransferase</keyword>
<keyword id="KW-1185">Reference proteome</keyword>
<keyword id="KW-0808">Transferase</keyword>
<protein>
    <recommendedName>
        <fullName evidence="2">Sulfate adenylyltransferase subunit 1</fullName>
        <ecNumber evidence="2">2.7.7.4</ecNumber>
    </recommendedName>
    <alternativeName>
        <fullName evidence="2">ATP-sulfurylase large subunit</fullName>
    </alternativeName>
    <alternativeName>
        <fullName evidence="2">Sulfate adenylate transferase</fullName>
        <shortName evidence="2">SAT</shortName>
    </alternativeName>
</protein>
<name>CYSN_YERPE</name>
<evidence type="ECO:0000250" key="1"/>
<evidence type="ECO:0000255" key="2">
    <source>
        <dbReference type="HAMAP-Rule" id="MF_00062"/>
    </source>
</evidence>
<evidence type="ECO:0000305" key="3"/>
<gene>
    <name evidence="2" type="primary">cysN</name>
    <name type="ordered locus">YPO3365</name>
    <name type="ordered locus">y0824</name>
    <name type="ordered locus">YP_0322</name>
</gene>